<feature type="transit peptide" description="Chloroplast" evidence="6">
    <location>
        <begin position="1"/>
        <end position="52"/>
    </location>
</feature>
<feature type="chain" id="PRO_0000440244" description="(R)-limonene synthase 1, chloroplastic">
    <location>
        <begin position="53"/>
        <end position="607"/>
    </location>
</feature>
<feature type="short sequence motif" description="DDXXD motif" evidence="5">
    <location>
        <begin position="343"/>
        <end position="347"/>
    </location>
</feature>
<feature type="binding site" evidence="3">
    <location>
        <position position="343"/>
    </location>
    <ligand>
        <name>Mn(2+)</name>
        <dbReference type="ChEBI" id="CHEBI:29035"/>
        <label>1</label>
    </ligand>
</feature>
<feature type="binding site" evidence="3">
    <location>
        <position position="343"/>
    </location>
    <ligand>
        <name>Mn(2+)</name>
        <dbReference type="ChEBI" id="CHEBI:29035"/>
        <label>2</label>
    </ligand>
</feature>
<feature type="binding site" evidence="3">
    <location>
        <position position="343"/>
    </location>
    <ligand>
        <name>substrate</name>
    </ligand>
</feature>
<feature type="binding site" evidence="3">
    <location>
        <position position="347"/>
    </location>
    <ligand>
        <name>Mn(2+)</name>
        <dbReference type="ChEBI" id="CHEBI:29035"/>
        <label>1</label>
    </ligand>
</feature>
<feature type="binding site" evidence="3">
    <location>
        <position position="347"/>
    </location>
    <ligand>
        <name>Mn(2+)</name>
        <dbReference type="ChEBI" id="CHEBI:29035"/>
        <label>2</label>
    </ligand>
</feature>
<feature type="binding site" evidence="3">
    <location>
        <position position="347"/>
    </location>
    <ligand>
        <name>substrate</name>
    </ligand>
</feature>
<feature type="binding site" evidence="3">
    <location>
        <position position="485"/>
    </location>
    <ligand>
        <name>substrate</name>
    </ligand>
</feature>
<feature type="binding site" evidence="3">
    <location>
        <position position="488"/>
    </location>
    <ligand>
        <name>Mn(2+)</name>
        <dbReference type="ChEBI" id="CHEBI:29035"/>
        <label>3</label>
    </ligand>
</feature>
<feature type="binding site" evidence="3">
    <location>
        <position position="488"/>
    </location>
    <ligand>
        <name>substrate</name>
    </ligand>
</feature>
<feature type="binding site" evidence="3">
    <location>
        <position position="504"/>
    </location>
    <ligand>
        <name>substrate</name>
    </ligand>
</feature>
<feature type="mutagenesis site" description="50-fold decreased catalytic activity." evidence="2">
    <original>Y</original>
    <variation>F</variation>
    <location>
        <position position="565"/>
    </location>
</feature>
<feature type="helix" evidence="10">
    <location>
        <begin position="65"/>
        <end position="70"/>
    </location>
</feature>
<feature type="helix" evidence="10">
    <location>
        <begin position="74"/>
        <end position="76"/>
    </location>
</feature>
<feature type="helix" evidence="10">
    <location>
        <begin position="78"/>
        <end position="96"/>
    </location>
</feature>
<feature type="helix" evidence="10">
    <location>
        <begin position="101"/>
        <end position="113"/>
    </location>
</feature>
<feature type="helix" evidence="10">
    <location>
        <begin position="117"/>
        <end position="119"/>
    </location>
</feature>
<feature type="helix" evidence="10">
    <location>
        <begin position="121"/>
        <end position="134"/>
    </location>
</feature>
<feature type="turn" evidence="9">
    <location>
        <begin position="138"/>
        <end position="140"/>
    </location>
</feature>
<feature type="helix" evidence="10">
    <location>
        <begin position="145"/>
        <end position="157"/>
    </location>
</feature>
<feature type="helix" evidence="10">
    <location>
        <begin position="164"/>
        <end position="170"/>
    </location>
</feature>
<feature type="turn" evidence="10">
    <location>
        <begin position="173"/>
        <end position="175"/>
    </location>
</feature>
<feature type="helix" evidence="10">
    <location>
        <begin position="182"/>
        <end position="192"/>
    </location>
</feature>
<feature type="helix" evidence="10">
    <location>
        <begin position="200"/>
        <end position="215"/>
    </location>
</feature>
<feature type="helix" evidence="10">
    <location>
        <begin position="227"/>
        <end position="238"/>
    </location>
</feature>
<feature type="helix" evidence="10">
    <location>
        <begin position="241"/>
        <end position="243"/>
    </location>
</feature>
<feature type="helix" evidence="10">
    <location>
        <begin position="247"/>
        <end position="249"/>
    </location>
</feature>
<feature type="helix" evidence="10">
    <location>
        <begin position="250"/>
        <end position="258"/>
    </location>
</feature>
<feature type="helix" evidence="10">
    <location>
        <begin position="265"/>
        <end position="296"/>
    </location>
</feature>
<feature type="helix" evidence="10">
    <location>
        <begin position="298"/>
        <end position="301"/>
    </location>
</feature>
<feature type="helix" evidence="10">
    <location>
        <begin position="309"/>
        <end position="319"/>
    </location>
</feature>
<feature type="helix" evidence="10">
    <location>
        <begin position="323"/>
        <end position="325"/>
    </location>
</feature>
<feature type="helix" evidence="10">
    <location>
        <begin position="326"/>
        <end position="347"/>
    </location>
</feature>
<feature type="helix" evidence="10">
    <location>
        <begin position="352"/>
        <end position="364"/>
    </location>
</feature>
<feature type="helix" evidence="10">
    <location>
        <begin position="367"/>
        <end position="373"/>
    </location>
</feature>
<feature type="helix" evidence="10">
    <location>
        <begin position="376"/>
        <end position="400"/>
    </location>
</feature>
<feature type="helix" evidence="10">
    <location>
        <begin position="405"/>
        <end position="427"/>
    </location>
</feature>
<feature type="helix" evidence="10">
    <location>
        <begin position="434"/>
        <end position="444"/>
    </location>
</feature>
<feature type="helix" evidence="10">
    <location>
        <begin position="447"/>
        <end position="458"/>
    </location>
</feature>
<feature type="helix" evidence="10">
    <location>
        <begin position="464"/>
        <end position="471"/>
    </location>
</feature>
<feature type="helix" evidence="10">
    <location>
        <begin position="475"/>
        <end position="490"/>
    </location>
</feature>
<feature type="helix" evidence="10">
    <location>
        <begin position="494"/>
        <end position="499"/>
    </location>
</feature>
<feature type="helix" evidence="10">
    <location>
        <begin position="505"/>
        <end position="513"/>
    </location>
</feature>
<feature type="helix" evidence="10">
    <location>
        <begin position="517"/>
        <end position="540"/>
    </location>
</feature>
<feature type="strand" evidence="10">
    <location>
        <begin position="544"/>
        <end position="546"/>
    </location>
</feature>
<feature type="helix" evidence="10">
    <location>
        <begin position="548"/>
        <end position="566"/>
    </location>
</feature>
<feature type="strand" evidence="8">
    <location>
        <begin position="567"/>
        <end position="570"/>
    </location>
</feature>
<feature type="helix" evidence="10">
    <location>
        <begin position="581"/>
        <end position="586"/>
    </location>
</feature>
<evidence type="ECO:0000255" key="1"/>
<evidence type="ECO:0000269" key="2">
    <source>
    </source>
</evidence>
<evidence type="ECO:0000269" key="3">
    <source>
    </source>
</evidence>
<evidence type="ECO:0000303" key="4">
    <source>
    </source>
</evidence>
<evidence type="ECO:0000305" key="5"/>
<evidence type="ECO:0000305" key="6">
    <source>
    </source>
</evidence>
<evidence type="ECO:0000312" key="7">
    <source>
        <dbReference type="EMBL" id="AOP12358.2"/>
    </source>
</evidence>
<evidence type="ECO:0007829" key="8">
    <source>
        <dbReference type="PDB" id="5UV0"/>
    </source>
</evidence>
<evidence type="ECO:0007829" key="9">
    <source>
        <dbReference type="PDB" id="5UV1"/>
    </source>
</evidence>
<evidence type="ECO:0007829" key="10">
    <source>
        <dbReference type="PDB" id="5UV2"/>
    </source>
</evidence>
<dbReference type="EC" id="4.2.3.20" evidence="2 3"/>
<dbReference type="EMBL" id="KU746814">
    <property type="protein sequence ID" value="AOP12358.2"/>
    <property type="molecule type" value="mRNA"/>
</dbReference>
<dbReference type="PDB" id="5UV0">
    <property type="method" value="X-ray"/>
    <property type="resolution" value="2.30 A"/>
    <property type="chains" value="A=1-607"/>
</dbReference>
<dbReference type="PDB" id="5UV1">
    <property type="method" value="X-ray"/>
    <property type="resolution" value="2.40 A"/>
    <property type="chains" value="A=1-607"/>
</dbReference>
<dbReference type="PDB" id="5UV2">
    <property type="method" value="X-ray"/>
    <property type="resolution" value="2.20 A"/>
    <property type="chains" value="A=1-607"/>
</dbReference>
<dbReference type="PDB" id="6ONM">
    <property type="method" value="X-ray"/>
    <property type="resolution" value="2.70 A"/>
    <property type="chains" value="A=1-607"/>
</dbReference>
<dbReference type="PDBsum" id="5UV0"/>
<dbReference type="PDBsum" id="5UV1"/>
<dbReference type="PDBsum" id="5UV2"/>
<dbReference type="PDBsum" id="6ONM"/>
<dbReference type="SMR" id="A0A1C9J6A7"/>
<dbReference type="PaxDb" id="2711-XP_006471092.1"/>
<dbReference type="eggNOG" id="ENOG502QUH3">
    <property type="taxonomic scope" value="Eukaryota"/>
</dbReference>
<dbReference type="BRENDA" id="4.2.3.20">
    <property type="organism ID" value="1426"/>
</dbReference>
<dbReference type="SABIO-RK" id="A0A1C9J6A7"/>
<dbReference type="GO" id="GO:0009507">
    <property type="term" value="C:chloroplast"/>
    <property type="evidence" value="ECO:0007669"/>
    <property type="project" value="UniProtKB-SubCell"/>
</dbReference>
<dbReference type="GO" id="GO:0034002">
    <property type="term" value="F:(R)-limonene synthase activity"/>
    <property type="evidence" value="ECO:0007669"/>
    <property type="project" value="UniProtKB-EC"/>
</dbReference>
<dbReference type="GO" id="GO:0000287">
    <property type="term" value="F:magnesium ion binding"/>
    <property type="evidence" value="ECO:0007669"/>
    <property type="project" value="InterPro"/>
</dbReference>
<dbReference type="GO" id="GO:0016102">
    <property type="term" value="P:diterpenoid biosynthetic process"/>
    <property type="evidence" value="ECO:0007669"/>
    <property type="project" value="InterPro"/>
</dbReference>
<dbReference type="CDD" id="cd00684">
    <property type="entry name" value="Terpene_cyclase_plant_C1"/>
    <property type="match status" value="1"/>
</dbReference>
<dbReference type="FunFam" id="1.10.600.10:FF:000007">
    <property type="entry name" value="Isoprene synthase, chloroplastic"/>
    <property type="match status" value="1"/>
</dbReference>
<dbReference type="FunFam" id="1.50.10.130:FF:000001">
    <property type="entry name" value="Isoprene synthase, chloroplastic"/>
    <property type="match status" value="1"/>
</dbReference>
<dbReference type="Gene3D" id="1.10.600.10">
    <property type="entry name" value="Farnesyl Diphosphate Synthase"/>
    <property type="match status" value="1"/>
</dbReference>
<dbReference type="Gene3D" id="1.50.10.130">
    <property type="entry name" value="Terpene synthase, N-terminal domain"/>
    <property type="match status" value="1"/>
</dbReference>
<dbReference type="InterPro" id="IPR008949">
    <property type="entry name" value="Isoprenoid_synthase_dom_sf"/>
</dbReference>
<dbReference type="InterPro" id="IPR034741">
    <property type="entry name" value="Terpene_cyclase-like_1_C"/>
</dbReference>
<dbReference type="InterPro" id="IPR044814">
    <property type="entry name" value="Terpene_cyclase_plant_C1"/>
</dbReference>
<dbReference type="InterPro" id="IPR001906">
    <property type="entry name" value="Terpene_synth_N"/>
</dbReference>
<dbReference type="InterPro" id="IPR036965">
    <property type="entry name" value="Terpene_synth_N_sf"/>
</dbReference>
<dbReference type="InterPro" id="IPR050148">
    <property type="entry name" value="Terpene_synthase-like"/>
</dbReference>
<dbReference type="InterPro" id="IPR005630">
    <property type="entry name" value="Terpene_synthase_metal-bd"/>
</dbReference>
<dbReference type="InterPro" id="IPR008930">
    <property type="entry name" value="Terpenoid_cyclase/PrenylTrfase"/>
</dbReference>
<dbReference type="PANTHER" id="PTHR31225:SF245">
    <property type="entry name" value="(-)-ALPHA-TERPINEOL SYNTHASE-LIKE"/>
    <property type="match status" value="1"/>
</dbReference>
<dbReference type="PANTHER" id="PTHR31225">
    <property type="entry name" value="OS04G0344100 PROTEIN-RELATED"/>
    <property type="match status" value="1"/>
</dbReference>
<dbReference type="Pfam" id="PF01397">
    <property type="entry name" value="Terpene_synth"/>
    <property type="match status" value="1"/>
</dbReference>
<dbReference type="Pfam" id="PF03936">
    <property type="entry name" value="Terpene_synth_C"/>
    <property type="match status" value="1"/>
</dbReference>
<dbReference type="SFLD" id="SFLDS00005">
    <property type="entry name" value="Isoprenoid_Synthase_Type_I"/>
    <property type="match status" value="1"/>
</dbReference>
<dbReference type="SFLD" id="SFLDG01019">
    <property type="entry name" value="Terpene_Cyclase_Like_1_C_Termi"/>
    <property type="match status" value="1"/>
</dbReference>
<dbReference type="SUPFAM" id="SSF48239">
    <property type="entry name" value="Terpenoid cyclases/Protein prenyltransferases"/>
    <property type="match status" value="1"/>
</dbReference>
<dbReference type="SUPFAM" id="SSF48576">
    <property type="entry name" value="Terpenoid synthases"/>
    <property type="match status" value="1"/>
</dbReference>
<keyword id="KW-0002">3D-structure</keyword>
<keyword id="KW-0150">Chloroplast</keyword>
<keyword id="KW-0456">Lyase</keyword>
<keyword id="KW-0460">Magnesium</keyword>
<keyword id="KW-0464">Manganese</keyword>
<keyword id="KW-0479">Metal-binding</keyword>
<keyword id="KW-0934">Plastid</keyword>
<keyword id="KW-0809">Transit peptide</keyword>
<name>RLC1_CITSI</name>
<organism evidence="7">
    <name type="scientific">Citrus sinensis</name>
    <name type="common">Sweet orange</name>
    <name type="synonym">Citrus aurantium var. sinensis</name>
    <dbReference type="NCBI Taxonomy" id="2711"/>
    <lineage>
        <taxon>Eukaryota</taxon>
        <taxon>Viridiplantae</taxon>
        <taxon>Streptophyta</taxon>
        <taxon>Embryophyta</taxon>
        <taxon>Tracheophyta</taxon>
        <taxon>Spermatophyta</taxon>
        <taxon>Magnoliopsida</taxon>
        <taxon>eudicotyledons</taxon>
        <taxon>Gunneridae</taxon>
        <taxon>Pentapetalae</taxon>
        <taxon>rosids</taxon>
        <taxon>malvids</taxon>
        <taxon>Sapindales</taxon>
        <taxon>Rutaceae</taxon>
        <taxon>Aurantioideae</taxon>
        <taxon>Citrus</taxon>
    </lineage>
</organism>
<accession>A0A1C9J6A7</accession>
<sequence>MSSCINPSTLATSVNGFKCLPLATNRAAIRIMAKNKPVQCLVSTKYDNLTVDRRSANYQPSIWDHDFLQSLNSNYTDETYKRRAEELKGKVKTAIKDVTEPLDQLELIDNLQRLGLAYHFEPEIRNILRNIHNHNKDYNWRKENLYATSLEFRLLRQHGYPVSQEVFSGFKDDKVGFICDDFKGILSLHEASYYSLEGESIMEEAWQFTSKHLKEMMITSNSKEEDVFVAEQAKRALELPLHWKAPMLEARWFIHVYEKREDKNHLLLELAKLEFNTLQAIYQEELKDISGWWKDTGLGEKLSFARNRLVASFLWSMGIAFEPQFAYCRRVLTISIALITVIDDIYDVYGTLDELEIFTDAVARWDINYALKHLPGYMKMCFLALYNFVNEFAYYVLKQQDFDMLLSIKHAWLGLIQAYLVEAKWYHSKYTPKLEEYLENGLVSITGPLIITISYLSGTNPIIKKELEFLESNPDIVHWSSKIFRLQDDLGTSSDEIQRGDVPKSIQCYMHETGASEEVAREHIKDMMRQMWKKVNAYTADKDSPLTRTTAEFLLNLVRMSHFMYLHGDGHGVQNQETIDVGFTLLFQPIPLEDKDMAFTASPGTKG</sequence>
<comment type="function">
    <text evidence="2 3">Catalyzes the conversion of geranyl diphosphate to (+)-(4R)-limonene (PubMed:28272875, PubMed:28272876). Produces exclusively the (+)-enantiomer (PubMed:28272875). Can use neryl diphosphate as substrate (PubMed:28272876). Has no activity with farnesyl diphosphate (PubMed:28272875).</text>
</comment>
<comment type="catalytic activity">
    <reaction evidence="2 3">
        <text>(2E)-geranyl diphosphate = (4R)-limonene + diphosphate</text>
        <dbReference type="Rhea" id="RHEA:10940"/>
        <dbReference type="ChEBI" id="CHEBI:15382"/>
        <dbReference type="ChEBI" id="CHEBI:33019"/>
        <dbReference type="ChEBI" id="CHEBI:58057"/>
        <dbReference type="EC" id="4.2.3.20"/>
    </reaction>
</comment>
<comment type="cofactor">
    <cofactor evidence="2">
        <name>Mg(2+)</name>
        <dbReference type="ChEBI" id="CHEBI:18420"/>
    </cofactor>
    <cofactor evidence="2">
        <name>Mn(2+)</name>
        <dbReference type="ChEBI" id="CHEBI:29035"/>
    </cofactor>
    <text evidence="2 3">Binds 3 Mg(2+) or Mn(2+) ions per subunit (PubMed:28272876). The best cofactor is Mn(2+) (PubMed:28272875). No effect with monovalent cations (PubMed:28272875).</text>
</comment>
<comment type="activity regulation">
    <text evidence="3">Inhibited by 2-fluorogeranyl diphosphate (FGPP) and 2-fluoroneryl diphosphate (FNPP).</text>
</comment>
<comment type="biophysicochemical properties">
    <kinetics>
        <KM evidence="2">13.1 uM for geranyl diphosphate in presence of manganese</KM>
        <KM evidence="2">35 uM for geranyl diphosphate in presence of magnesium</KM>
        <KM evidence="3">9 uM for neryl diphosphate</KM>
        <text evidence="2 3">kcat is 0.186 sec(-1) for geranyl diphosphate in presence of manganese. kcat is 0.118 sec(-1) for geranyl diphosphate in presence of magnesium. kcat is 0.43 sec(-1) for neryl diphosphate.</text>
    </kinetics>
</comment>
<comment type="subcellular location">
    <subcellularLocation>
        <location evidence="1">Plastid</location>
        <location evidence="1">Chloroplast</location>
    </subcellularLocation>
</comment>
<comment type="domain">
    <text evidence="5">The Asp-Asp-Xaa-Xaa-Asp/Glu (DDXXD/E) motif is important for the catalytic activity, presumably through binding to Mg(2+).</text>
</comment>
<comment type="similarity">
    <text evidence="5">Belongs to the terpene synthase family.</text>
</comment>
<protein>
    <recommendedName>
        <fullName evidence="4">(R)-limonene synthase 1, chloroplastic</fullName>
        <ecNumber evidence="2 3">4.2.3.20</ecNumber>
    </recommendedName>
    <alternativeName>
        <fullName>(+)-limonene synthase 1</fullName>
    </alternativeName>
</protein>
<reference key="1">
    <citation type="journal article" date="2017" name="Biochemistry">
        <title>Functional and Structural Characterization of a (+)-Limonene Synthase from Citrus sinensis.</title>
        <authorList>
            <person name="Morehouse B.R."/>
            <person name="Kumar R.P."/>
            <person name="Matos J.O."/>
            <person name="Olsen S.N."/>
            <person name="Entova S."/>
            <person name="Oprian D.D."/>
        </authorList>
    </citation>
    <scope>NUCLEOTIDE SEQUENCE [MRNA]</scope>
    <scope>X-RAY CRYSTALLOGRAPHY (2.3 ANGSTROMS) OF APOPROTEIN</scope>
    <scope>FUNCTION</scope>
    <scope>CATALYTIC ACTIVITY</scope>
    <scope>SUBSTRATE SPECIFICITY</scope>
    <scope>COFACTOR</scope>
    <scope>BIOPHYSICOCHEMICAL PROPERTIES</scope>
    <scope>MUTAGENESIS OF TYR-565</scope>
    <source>
        <strain>cv. Washington Navel</strain>
        <tissue>Flavedo</tissue>
    </source>
</reference>
<reference key="2">
    <citation type="journal article" date="2017" name="Biochemistry">
        <title>Structural Characterization of early michaelis complexes in the reaction catalyzed by (+)-limonene synthase from Citrus sinensis using fluorinated substrate analogues.</title>
        <authorList>
            <person name="Kumar R.P."/>
            <person name="Morehouse B.R."/>
            <person name="Matos J.O."/>
            <person name="Malik K."/>
            <person name="Lin H."/>
            <person name="Krauss I.J."/>
            <person name="Oprian D.D."/>
        </authorList>
    </citation>
    <scope>X-RAY CRYSTALLOGRAPHY (2.2 ANGSTROMS) IN COMPLEX WITH MANGANESE AND SUBSTRATE ANALOGS</scope>
    <scope>CATALYTIC ACTIVITY</scope>
    <scope>BIOPHYSICOCHEMICAL PROPERTIES</scope>
    <scope>SUBSTRATE SPECIFICITY</scope>
    <scope>ACTIVITY REGULATION</scope>
</reference>
<proteinExistence type="evidence at protein level"/>